<reference key="1">
    <citation type="journal article" date="2003" name="Nature">
        <title>Genome divergence in two Prochlorococcus ecotypes reflects oceanic niche differentiation.</title>
        <authorList>
            <person name="Rocap G."/>
            <person name="Larimer F.W."/>
            <person name="Lamerdin J.E."/>
            <person name="Malfatti S."/>
            <person name="Chain P."/>
            <person name="Ahlgren N.A."/>
            <person name="Arellano A."/>
            <person name="Coleman M."/>
            <person name="Hauser L."/>
            <person name="Hess W.R."/>
            <person name="Johnson Z.I."/>
            <person name="Land M.L."/>
            <person name="Lindell D."/>
            <person name="Post A.F."/>
            <person name="Regala W."/>
            <person name="Shah M."/>
            <person name="Shaw S.L."/>
            <person name="Steglich C."/>
            <person name="Sullivan M.B."/>
            <person name="Ting C.S."/>
            <person name="Tolonen A."/>
            <person name="Webb E.A."/>
            <person name="Zinser E.R."/>
            <person name="Chisholm S.W."/>
        </authorList>
    </citation>
    <scope>NUCLEOTIDE SEQUENCE [LARGE SCALE GENOMIC DNA]</scope>
    <source>
        <strain>MIT 9313</strain>
    </source>
</reference>
<comment type="function">
    <text evidence="1">Catalyzes the anti-1,4-elimination of the C-3 phosphate and the C-6 proR hydrogen from 5-enolpyruvylshikimate-3-phosphate (EPSP) to yield chorismate, which is the branch point compound that serves as the starting substrate for the three terminal pathways of aromatic amino acid biosynthesis. This reaction introduces a second double bond into the aromatic ring system.</text>
</comment>
<comment type="catalytic activity">
    <reaction evidence="1">
        <text>5-O-(1-carboxyvinyl)-3-phosphoshikimate = chorismate + phosphate</text>
        <dbReference type="Rhea" id="RHEA:21020"/>
        <dbReference type="ChEBI" id="CHEBI:29748"/>
        <dbReference type="ChEBI" id="CHEBI:43474"/>
        <dbReference type="ChEBI" id="CHEBI:57701"/>
        <dbReference type="EC" id="4.2.3.5"/>
    </reaction>
</comment>
<comment type="cofactor">
    <cofactor evidence="1">
        <name>FMNH2</name>
        <dbReference type="ChEBI" id="CHEBI:57618"/>
    </cofactor>
    <text evidence="1">Reduced FMN (FMNH(2)).</text>
</comment>
<comment type="pathway">
    <text evidence="1">Metabolic intermediate biosynthesis; chorismate biosynthesis; chorismate from D-erythrose 4-phosphate and phosphoenolpyruvate: step 7/7.</text>
</comment>
<comment type="subunit">
    <text evidence="1">Homotetramer.</text>
</comment>
<comment type="similarity">
    <text evidence="1">Belongs to the chorismate synthase family.</text>
</comment>
<sequence>MGSSFGDLFRISTFGESHGGGVGVIVEGCPPRLELDLQKIQAELDRRKPGQSKISTPRKEEDQVEILSGLLNNTTLGTPIAMVVRNKDHKPGDYKEMNVAFRPSHADATYQAKYGIQARSGGGRASARETIARVAAGAIAKQLLTKAHNTEVLAWVKRIHTLEAEINAQDVSIDDVEANIVRCPNQVMAAQMVERIEAISREGDSCGGVIECVVRNAPMGLGMPVFDKLEADLAKAVMSLPASKGFEIGSGFGGTLLKGSEHNDAFLPSNDGRLRTATNNSGGIQGGITNGESIVIRVAFKPTATIRKDQQTIDADGNTTTLSAKGRHDPCVLPRAVPIVEAMVSLVLADHLLRQQGQCSLW</sequence>
<dbReference type="EC" id="4.2.3.5" evidence="1"/>
<dbReference type="EMBL" id="BX548175">
    <property type="protein sequence ID" value="CAE21970.1"/>
    <property type="molecule type" value="Genomic_DNA"/>
</dbReference>
<dbReference type="RefSeq" id="WP_011131162.1">
    <property type="nucleotide sequence ID" value="NC_005071.1"/>
</dbReference>
<dbReference type="SMR" id="Q7V4Y9"/>
<dbReference type="KEGG" id="pmt:PMT_1795"/>
<dbReference type="eggNOG" id="COG0082">
    <property type="taxonomic scope" value="Bacteria"/>
</dbReference>
<dbReference type="HOGENOM" id="CLU_034547_0_1_3"/>
<dbReference type="OrthoDB" id="9771806at2"/>
<dbReference type="UniPathway" id="UPA00053">
    <property type="reaction ID" value="UER00090"/>
</dbReference>
<dbReference type="Proteomes" id="UP000001423">
    <property type="component" value="Chromosome"/>
</dbReference>
<dbReference type="GO" id="GO:0005829">
    <property type="term" value="C:cytosol"/>
    <property type="evidence" value="ECO:0007669"/>
    <property type="project" value="TreeGrafter"/>
</dbReference>
<dbReference type="GO" id="GO:0004107">
    <property type="term" value="F:chorismate synthase activity"/>
    <property type="evidence" value="ECO:0007669"/>
    <property type="project" value="UniProtKB-UniRule"/>
</dbReference>
<dbReference type="GO" id="GO:0010181">
    <property type="term" value="F:FMN binding"/>
    <property type="evidence" value="ECO:0007669"/>
    <property type="project" value="TreeGrafter"/>
</dbReference>
<dbReference type="GO" id="GO:0008652">
    <property type="term" value="P:amino acid biosynthetic process"/>
    <property type="evidence" value="ECO:0007669"/>
    <property type="project" value="UniProtKB-KW"/>
</dbReference>
<dbReference type="GO" id="GO:0009073">
    <property type="term" value="P:aromatic amino acid family biosynthetic process"/>
    <property type="evidence" value="ECO:0007669"/>
    <property type="project" value="UniProtKB-KW"/>
</dbReference>
<dbReference type="GO" id="GO:0009423">
    <property type="term" value="P:chorismate biosynthetic process"/>
    <property type="evidence" value="ECO:0007669"/>
    <property type="project" value="UniProtKB-UniRule"/>
</dbReference>
<dbReference type="CDD" id="cd07304">
    <property type="entry name" value="Chorismate_synthase"/>
    <property type="match status" value="1"/>
</dbReference>
<dbReference type="FunFam" id="3.60.150.10:FF:000003">
    <property type="entry name" value="Chorismate synthase"/>
    <property type="match status" value="1"/>
</dbReference>
<dbReference type="Gene3D" id="3.60.150.10">
    <property type="entry name" value="Chorismate synthase AroC"/>
    <property type="match status" value="1"/>
</dbReference>
<dbReference type="HAMAP" id="MF_00300">
    <property type="entry name" value="Chorismate_synth"/>
    <property type="match status" value="1"/>
</dbReference>
<dbReference type="InterPro" id="IPR000453">
    <property type="entry name" value="Chorismate_synth"/>
</dbReference>
<dbReference type="InterPro" id="IPR035904">
    <property type="entry name" value="Chorismate_synth_AroC_sf"/>
</dbReference>
<dbReference type="InterPro" id="IPR020541">
    <property type="entry name" value="Chorismate_synthase_CS"/>
</dbReference>
<dbReference type="NCBIfam" id="TIGR00033">
    <property type="entry name" value="aroC"/>
    <property type="match status" value="1"/>
</dbReference>
<dbReference type="NCBIfam" id="NF003793">
    <property type="entry name" value="PRK05382.1"/>
    <property type="match status" value="1"/>
</dbReference>
<dbReference type="PANTHER" id="PTHR21085">
    <property type="entry name" value="CHORISMATE SYNTHASE"/>
    <property type="match status" value="1"/>
</dbReference>
<dbReference type="PANTHER" id="PTHR21085:SF0">
    <property type="entry name" value="CHORISMATE SYNTHASE"/>
    <property type="match status" value="1"/>
</dbReference>
<dbReference type="Pfam" id="PF01264">
    <property type="entry name" value="Chorismate_synt"/>
    <property type="match status" value="1"/>
</dbReference>
<dbReference type="PIRSF" id="PIRSF001456">
    <property type="entry name" value="Chorismate_synth"/>
    <property type="match status" value="1"/>
</dbReference>
<dbReference type="SUPFAM" id="SSF103263">
    <property type="entry name" value="Chorismate synthase, AroC"/>
    <property type="match status" value="1"/>
</dbReference>
<dbReference type="PROSITE" id="PS00787">
    <property type="entry name" value="CHORISMATE_SYNTHASE_1"/>
    <property type="match status" value="1"/>
</dbReference>
<dbReference type="PROSITE" id="PS00788">
    <property type="entry name" value="CHORISMATE_SYNTHASE_2"/>
    <property type="match status" value="1"/>
</dbReference>
<dbReference type="PROSITE" id="PS00789">
    <property type="entry name" value="CHORISMATE_SYNTHASE_3"/>
    <property type="match status" value="1"/>
</dbReference>
<gene>
    <name evidence="1" type="primary">aroC</name>
    <name type="ordered locus">PMT_1795</name>
</gene>
<organism>
    <name type="scientific">Prochlorococcus marinus (strain MIT 9313)</name>
    <dbReference type="NCBI Taxonomy" id="74547"/>
    <lineage>
        <taxon>Bacteria</taxon>
        <taxon>Bacillati</taxon>
        <taxon>Cyanobacteriota</taxon>
        <taxon>Cyanophyceae</taxon>
        <taxon>Synechococcales</taxon>
        <taxon>Prochlorococcaceae</taxon>
        <taxon>Prochlorococcus</taxon>
    </lineage>
</organism>
<keyword id="KW-0028">Amino-acid biosynthesis</keyword>
<keyword id="KW-0057">Aromatic amino acid biosynthesis</keyword>
<keyword id="KW-0274">FAD</keyword>
<keyword id="KW-0285">Flavoprotein</keyword>
<keyword id="KW-0288">FMN</keyword>
<keyword id="KW-0456">Lyase</keyword>
<keyword id="KW-0521">NADP</keyword>
<keyword id="KW-1185">Reference proteome</keyword>
<proteinExistence type="inferred from homology"/>
<feature type="chain" id="PRO_0000140629" description="Chorismate synthase">
    <location>
        <begin position="1"/>
        <end position="362"/>
    </location>
</feature>
<feature type="binding site" evidence="1">
    <location>
        <position position="47"/>
    </location>
    <ligand>
        <name>NADP(+)</name>
        <dbReference type="ChEBI" id="CHEBI:58349"/>
    </ligand>
</feature>
<feature type="binding site" evidence="1">
    <location>
        <begin position="124"/>
        <end position="126"/>
    </location>
    <ligand>
        <name>FMN</name>
        <dbReference type="ChEBI" id="CHEBI:58210"/>
    </ligand>
</feature>
<feature type="binding site" evidence="1">
    <location>
        <position position="286"/>
    </location>
    <ligand>
        <name>FMN</name>
        <dbReference type="ChEBI" id="CHEBI:58210"/>
    </ligand>
</feature>
<feature type="binding site" evidence="1">
    <location>
        <begin position="301"/>
        <end position="305"/>
    </location>
    <ligand>
        <name>FMN</name>
        <dbReference type="ChEBI" id="CHEBI:58210"/>
    </ligand>
</feature>
<feature type="binding site" evidence="1">
    <location>
        <position position="327"/>
    </location>
    <ligand>
        <name>FMN</name>
        <dbReference type="ChEBI" id="CHEBI:58210"/>
    </ligand>
</feature>
<protein>
    <recommendedName>
        <fullName evidence="1">Chorismate synthase</fullName>
        <shortName evidence="1">CS</shortName>
        <ecNumber evidence="1">4.2.3.5</ecNumber>
    </recommendedName>
    <alternativeName>
        <fullName evidence="1">5-enolpyruvylshikimate-3-phosphate phospholyase</fullName>
    </alternativeName>
</protein>
<accession>Q7V4Y9</accession>
<evidence type="ECO:0000255" key="1">
    <source>
        <dbReference type="HAMAP-Rule" id="MF_00300"/>
    </source>
</evidence>
<name>AROC_PROMM</name>